<organism>
    <name type="scientific">Caenorhabditis briggsae</name>
    <dbReference type="NCBI Taxonomy" id="6238"/>
    <lineage>
        <taxon>Eukaryota</taxon>
        <taxon>Metazoa</taxon>
        <taxon>Ecdysozoa</taxon>
        <taxon>Nematoda</taxon>
        <taxon>Chromadorea</taxon>
        <taxon>Rhabditida</taxon>
        <taxon>Rhabditina</taxon>
        <taxon>Rhabditomorpha</taxon>
        <taxon>Rhabditoidea</taxon>
        <taxon>Rhabditidae</taxon>
        <taxon>Peloderinae</taxon>
        <taxon>Caenorhabditis</taxon>
    </lineage>
</organism>
<name>SYF2_CAEBR</name>
<feature type="chain" id="PRO_0000250383" description="Pre-mRNA-splicing factor syf-2">
    <location>
        <begin position="1"/>
        <end position="233"/>
    </location>
</feature>
<feature type="region of interest" description="Disordered" evidence="4">
    <location>
        <begin position="1"/>
        <end position="80"/>
    </location>
</feature>
<feature type="region of interest" description="Disordered" evidence="4">
    <location>
        <begin position="95"/>
        <end position="119"/>
    </location>
</feature>
<feature type="coiled-coil region" evidence="3">
    <location>
        <begin position="18"/>
        <end position="77"/>
    </location>
</feature>
<feature type="compositionally biased region" description="Polar residues" evidence="4">
    <location>
        <begin position="1"/>
        <end position="16"/>
    </location>
</feature>
<feature type="compositionally biased region" description="Basic and acidic residues" evidence="4">
    <location>
        <begin position="17"/>
        <end position="80"/>
    </location>
</feature>
<keyword id="KW-0175">Coiled coil</keyword>
<keyword id="KW-0507">mRNA processing</keyword>
<keyword id="KW-0508">mRNA splicing</keyword>
<keyword id="KW-0539">Nucleus</keyword>
<keyword id="KW-1185">Reference proteome</keyword>
<keyword id="KW-0747">Spliceosome</keyword>
<proteinExistence type="inferred from homology"/>
<dbReference type="EMBL" id="HE600949">
    <property type="protein sequence ID" value="CAP34530.2"/>
    <property type="molecule type" value="Genomic_DNA"/>
</dbReference>
<dbReference type="SMR" id="Q612R3"/>
<dbReference type="FunCoup" id="Q612R3">
    <property type="interactions" value="2140"/>
</dbReference>
<dbReference type="STRING" id="6238.Q612R3"/>
<dbReference type="EnsemblMetazoa" id="CBG16608.1">
    <property type="protein sequence ID" value="CBG16608.1"/>
    <property type="gene ID" value="WBGene00036500"/>
</dbReference>
<dbReference type="WormBase" id="CBG16608">
    <property type="protein sequence ID" value="CBP25827"/>
    <property type="gene ID" value="WBGene00036500"/>
    <property type="gene designation" value="Cbr-syf-2"/>
</dbReference>
<dbReference type="eggNOG" id="KOG2609">
    <property type="taxonomic scope" value="Eukaryota"/>
</dbReference>
<dbReference type="HOGENOM" id="CLU_051065_3_0_1"/>
<dbReference type="InParanoid" id="Q612R3"/>
<dbReference type="OMA" id="RRRMHND"/>
<dbReference type="Proteomes" id="UP000008549">
    <property type="component" value="Unassembled WGS sequence"/>
</dbReference>
<dbReference type="GO" id="GO:0071013">
    <property type="term" value="C:catalytic step 2 spliceosome"/>
    <property type="evidence" value="ECO:0000318"/>
    <property type="project" value="GO_Central"/>
</dbReference>
<dbReference type="GO" id="GO:0071014">
    <property type="term" value="C:post-mRNA release spliceosomal complex"/>
    <property type="evidence" value="ECO:0000318"/>
    <property type="project" value="GO_Central"/>
</dbReference>
<dbReference type="GO" id="GO:0000974">
    <property type="term" value="C:Prp19 complex"/>
    <property type="evidence" value="ECO:0000318"/>
    <property type="project" value="GO_Central"/>
</dbReference>
<dbReference type="GO" id="GO:0006397">
    <property type="term" value="P:mRNA processing"/>
    <property type="evidence" value="ECO:0007669"/>
    <property type="project" value="UniProtKB-KW"/>
</dbReference>
<dbReference type="GO" id="GO:0008380">
    <property type="term" value="P:RNA splicing"/>
    <property type="evidence" value="ECO:0007669"/>
    <property type="project" value="UniProtKB-KW"/>
</dbReference>
<dbReference type="InterPro" id="IPR013260">
    <property type="entry name" value="mRNA_splic_SYF2"/>
</dbReference>
<dbReference type="PANTHER" id="PTHR13264">
    <property type="entry name" value="GCIP-INTERACTING PROTEIN P29"/>
    <property type="match status" value="1"/>
</dbReference>
<dbReference type="PANTHER" id="PTHR13264:SF5">
    <property type="entry name" value="PRE-MRNA-SPLICING FACTOR SYF2"/>
    <property type="match status" value="1"/>
</dbReference>
<dbReference type="Pfam" id="PF08231">
    <property type="entry name" value="SYF2"/>
    <property type="match status" value="1"/>
</dbReference>
<accession>Q612R3</accession>
<accession>A8XPK9</accession>
<evidence type="ECO:0000250" key="1">
    <source>
        <dbReference type="UniProtKB" id="O95926"/>
    </source>
</evidence>
<evidence type="ECO:0000250" key="2">
    <source>
        <dbReference type="UniProtKB" id="P53277"/>
    </source>
</evidence>
<evidence type="ECO:0000255" key="3"/>
<evidence type="ECO:0000256" key="4">
    <source>
        <dbReference type="SAM" id="MobiDB-lite"/>
    </source>
</evidence>
<evidence type="ECO:0000305" key="5"/>
<evidence type="ECO:0000312" key="6">
    <source>
        <dbReference type="WormBase" id="CBG16608"/>
    </source>
</evidence>
<reference key="1">
    <citation type="journal article" date="2003" name="PLoS Biol.">
        <title>The genome sequence of Caenorhabditis briggsae: a platform for comparative genomics.</title>
        <authorList>
            <person name="Stein L.D."/>
            <person name="Bao Z."/>
            <person name="Blasiar D."/>
            <person name="Blumenthal T."/>
            <person name="Brent M.R."/>
            <person name="Chen N."/>
            <person name="Chinwalla A."/>
            <person name="Clarke L."/>
            <person name="Clee C."/>
            <person name="Coghlan A."/>
            <person name="Coulson A."/>
            <person name="D'Eustachio P."/>
            <person name="Fitch D.H.A."/>
            <person name="Fulton L.A."/>
            <person name="Fulton R.E."/>
            <person name="Griffiths-Jones S."/>
            <person name="Harris T.W."/>
            <person name="Hillier L.W."/>
            <person name="Kamath R."/>
            <person name="Kuwabara P.E."/>
            <person name="Mardis E.R."/>
            <person name="Marra M.A."/>
            <person name="Miner T.L."/>
            <person name="Minx P."/>
            <person name="Mullikin J.C."/>
            <person name="Plumb R.W."/>
            <person name="Rogers J."/>
            <person name="Schein J.E."/>
            <person name="Sohrmann M."/>
            <person name="Spieth J."/>
            <person name="Stajich J.E."/>
            <person name="Wei C."/>
            <person name="Willey D."/>
            <person name="Wilson R.K."/>
            <person name="Durbin R.M."/>
            <person name="Waterston R.H."/>
        </authorList>
    </citation>
    <scope>NUCLEOTIDE SEQUENCE [LARGE SCALE GENOMIC DNA]</scope>
    <source>
        <strain>AF16</strain>
    </source>
</reference>
<sequence>MSDSEQTSSGTASSGSKMKDFNQRFRDLHKMRQKARKENHAQVVEEDRRKKLPKNFEAKKERDQWQVKELQDRKEAEDKGLDYERVRSLEMSADVTEKLEQKRKRKKNPDQGFASYEDMTLRQHTRLTAALDPDLESYKKMKECVGGDQFYPTADTLIHGNHYPTTSAMDRLVKDVHGQVKRREQYHRRRLYDPDAPIDYINEKNKKFNKKLDKYYGKYTEDIKDDLERGTAI</sequence>
<gene>
    <name evidence="6" type="primary">syf-2</name>
    <name evidence="6" type="ORF">CBG16608</name>
</gene>
<comment type="function">
    <text evidence="2">May be involved in pre-mRNA splicing.</text>
</comment>
<comment type="subunit">
    <text evidence="2">May be part of a spliceosome complex.</text>
</comment>
<comment type="subcellular location">
    <subcellularLocation>
        <location evidence="1">Nucleus</location>
    </subcellularLocation>
</comment>
<comment type="similarity">
    <text evidence="5">Belongs to the SYF2 family.</text>
</comment>
<protein>
    <recommendedName>
        <fullName>Pre-mRNA-splicing factor syf-2</fullName>
    </recommendedName>
</protein>